<protein>
    <recommendedName>
        <fullName>Actin, cytoskeletal 3</fullName>
        <ecNumber evidence="1">3.6.4.-</ecNumber>
    </recommendedName>
    <alternativeName>
        <fullName>LPC3</fullName>
    </alternativeName>
</protein>
<evidence type="ECO:0000250" key="1">
    <source>
        <dbReference type="UniProtKB" id="P68137"/>
    </source>
</evidence>
<evidence type="ECO:0000305" key="2"/>
<name>ACT3_LYTPI</name>
<dbReference type="EC" id="3.6.4.-" evidence="1"/>
<dbReference type="EMBL" id="U09653">
    <property type="protein sequence ID" value="AAA53365.1"/>
    <property type="molecule type" value="Genomic_DNA"/>
</dbReference>
<dbReference type="SMR" id="Q25379"/>
<dbReference type="OrthoDB" id="10249208at2759"/>
<dbReference type="GO" id="GO:0005737">
    <property type="term" value="C:cytoplasm"/>
    <property type="evidence" value="ECO:0007669"/>
    <property type="project" value="UniProtKB-SubCell"/>
</dbReference>
<dbReference type="GO" id="GO:0005856">
    <property type="term" value="C:cytoskeleton"/>
    <property type="evidence" value="ECO:0007669"/>
    <property type="project" value="UniProtKB-SubCell"/>
</dbReference>
<dbReference type="GO" id="GO:0005524">
    <property type="term" value="F:ATP binding"/>
    <property type="evidence" value="ECO:0007669"/>
    <property type="project" value="UniProtKB-KW"/>
</dbReference>
<dbReference type="GO" id="GO:0016787">
    <property type="term" value="F:hydrolase activity"/>
    <property type="evidence" value="ECO:0007669"/>
    <property type="project" value="UniProtKB-KW"/>
</dbReference>
<dbReference type="FunFam" id="3.90.640.10:FF:000050">
    <property type="entry name" value="Actin, cytoskeletal 3"/>
    <property type="match status" value="1"/>
</dbReference>
<dbReference type="FunFam" id="3.30.420.40:FF:000404">
    <property type="entry name" value="Major actin"/>
    <property type="match status" value="1"/>
</dbReference>
<dbReference type="FunFam" id="3.30.420.40:FF:000058">
    <property type="entry name" value="Putative actin-related protein 5"/>
    <property type="match status" value="1"/>
</dbReference>
<dbReference type="Gene3D" id="3.30.420.40">
    <property type="match status" value="2"/>
</dbReference>
<dbReference type="Gene3D" id="3.90.640.10">
    <property type="entry name" value="Actin, Chain A, domain 4"/>
    <property type="match status" value="1"/>
</dbReference>
<dbReference type="InterPro" id="IPR004000">
    <property type="entry name" value="Actin"/>
</dbReference>
<dbReference type="InterPro" id="IPR004001">
    <property type="entry name" value="Actin_CS"/>
</dbReference>
<dbReference type="InterPro" id="IPR043129">
    <property type="entry name" value="ATPase_NBD"/>
</dbReference>
<dbReference type="PANTHER" id="PTHR11937">
    <property type="entry name" value="ACTIN"/>
    <property type="match status" value="1"/>
</dbReference>
<dbReference type="Pfam" id="PF00022">
    <property type="entry name" value="Actin"/>
    <property type="match status" value="1"/>
</dbReference>
<dbReference type="SMART" id="SM00268">
    <property type="entry name" value="ACTIN"/>
    <property type="match status" value="1"/>
</dbReference>
<dbReference type="SUPFAM" id="SSF53067">
    <property type="entry name" value="Actin-like ATPase domain"/>
    <property type="match status" value="1"/>
</dbReference>
<dbReference type="PROSITE" id="PS00432">
    <property type="entry name" value="ACTINS_2"/>
    <property type="match status" value="1"/>
</dbReference>
<organism>
    <name type="scientific">Lytechinus pictus</name>
    <name type="common">Painted sea urchin</name>
    <dbReference type="NCBI Taxonomy" id="7653"/>
    <lineage>
        <taxon>Eukaryota</taxon>
        <taxon>Metazoa</taxon>
        <taxon>Echinodermata</taxon>
        <taxon>Eleutherozoa</taxon>
        <taxon>Echinozoa</taxon>
        <taxon>Echinoidea</taxon>
        <taxon>Euechinoidea</taxon>
        <taxon>Echinacea</taxon>
        <taxon>Temnopleuroida</taxon>
        <taxon>Toxopneustidae</taxon>
        <taxon>Lytechinus</taxon>
    </lineage>
</organism>
<comment type="function">
    <text>Actins are highly conserved proteins that are involved in various types of cell motility and are ubiquitously expressed in all eukaryotic cells.</text>
</comment>
<comment type="catalytic activity">
    <reaction evidence="1">
        <text>ATP + H2O = ADP + phosphate + H(+)</text>
        <dbReference type="Rhea" id="RHEA:13065"/>
        <dbReference type="ChEBI" id="CHEBI:15377"/>
        <dbReference type="ChEBI" id="CHEBI:15378"/>
        <dbReference type="ChEBI" id="CHEBI:30616"/>
        <dbReference type="ChEBI" id="CHEBI:43474"/>
        <dbReference type="ChEBI" id="CHEBI:456216"/>
    </reaction>
</comment>
<comment type="subcellular location">
    <subcellularLocation>
        <location>Cytoplasm</location>
    </subcellularLocation>
    <subcellularLocation>
        <location>Cytoplasm</location>
        <location>Cytoskeleton</location>
    </subcellularLocation>
</comment>
<comment type="similarity">
    <text evidence="2">Belongs to the actin family.</text>
</comment>
<keyword id="KW-0067">ATP-binding</keyword>
<keyword id="KW-0963">Cytoplasm</keyword>
<keyword id="KW-0206">Cytoskeleton</keyword>
<keyword id="KW-0378">Hydrolase</keyword>
<keyword id="KW-0547">Nucleotide-binding</keyword>
<accession>Q25379</accession>
<proteinExistence type="inferred from homology"/>
<reference key="1">
    <citation type="journal article" date="1994" name="J. Mol. Evol.">
        <title>Evolution of actin gene families of sea urchins.</title>
        <authorList>
            <person name="Fang H."/>
            <person name="Brandhorst B.P."/>
        </authorList>
    </citation>
    <scope>NUCLEOTIDE SEQUENCE [GENOMIC DNA]</scope>
</reference>
<sequence length="172" mass="19379">AEREIVRNIKEKLCYVALDFEQEMQTAASSSSLEKSYELPDGQVITIGNERFRCPEALFQPSFLGMESAGIHETCYNSIMKCDVDIRKFLYANTVLSGGSTMFPGIADRMQKEITAFAPPTMKVKIIAPPERKYSVWIGGSILASLSTFQQMWISKQEYDESGPSIVHRKCF</sequence>
<feature type="chain" id="PRO_0000088959" description="Actin, cytoskeletal 3">
    <location>
        <begin position="1" status="less than"/>
        <end position="172" status="greater than"/>
    </location>
</feature>
<feature type="non-terminal residue">
    <location>
        <position position="1"/>
    </location>
</feature>
<feature type="non-terminal residue">
    <location>
        <position position="172"/>
    </location>
</feature>